<sequence>MSFDIKWENLTVDNTINESIQSFLDEQFKKLSLPSYISNLSVTDFQLGEIPPEITIRHIGDPFDEFYEDTTDSPETEQPKEEYTGDDDDDDDDDEDDESDDDGPGLSTISEGIHLLNFNRTGSPLPDATPLSPRPMNRSRDSFQSILHPFGVNIGPTGSETPTNLLNQSYFSSRRVSIKQKQPLYDENDIQLIVEFNYKGNLHMNILVNLLVNYPSPNFISLPIKLHITDIEIHSIATIAYLKKAVFLSFLCDVNDETIPEFNNSQSIEYYTKNNPIDIIKKIKIESEIGEVESNILRNVGKVERFLVEQLRNILREELAWPSWICLDMNDDDEEEEEEENPSESSSTTHVGS</sequence>
<feature type="chain" id="PRO_0000384280" description="Mitochondrial distribution and morphology protein 12">
    <location>
        <begin position="1"/>
        <end position="353"/>
    </location>
</feature>
<feature type="domain" description="SMP-LTD" evidence="1">
    <location>
        <begin position="1"/>
        <end position="330"/>
    </location>
</feature>
<feature type="region of interest" description="Disordered" evidence="2">
    <location>
        <begin position="64"/>
        <end position="140"/>
    </location>
</feature>
<feature type="region of interest" description="Disordered" evidence="2">
    <location>
        <begin position="330"/>
        <end position="353"/>
    </location>
</feature>
<feature type="compositionally biased region" description="Acidic residues" evidence="2">
    <location>
        <begin position="64"/>
        <end position="75"/>
    </location>
</feature>
<feature type="compositionally biased region" description="Acidic residues" evidence="2">
    <location>
        <begin position="84"/>
        <end position="103"/>
    </location>
</feature>
<feature type="compositionally biased region" description="Acidic residues" evidence="2">
    <location>
        <begin position="330"/>
        <end position="342"/>
    </location>
</feature>
<comment type="function">
    <text evidence="1">Component of the ERMES/MDM complex, which serves as a molecular tether to connect the endoplasmic reticulum (ER) and mitochondria. Components of this complex are involved in the control of mitochondrial shape and protein biogenesis, and function in nonvesicular lipid trafficking between the ER and mitochondria. MDM12 is required for the interaction of the ER-resident membrane protein MMM1 and the outer mitochondrial membrane-resident beta-barrel protein MDM10. The MDM12-MMM1 subcomplex functions in the major beta-barrel assembly pathway that is responsible for biogenesis of all mitochondrial outer membrane beta-barrel proteins, and acts in a late step after the SAM complex. The MDM10-MDM12-MMM1 subcomplex further acts in the TOM40-specific pathway after the action of the MDM12-MMM1 complex. Essential for establishing and maintaining the structure of mitochondria and maintenance of mtDNA nucleoids.</text>
</comment>
<comment type="subunit">
    <text evidence="1">Component of the ER-mitochondria encounter structure (ERMES) or MDM complex, composed of MMM1, MDM10, MDM12 and MDM34. A MMM1 homodimer associates with one molecule of MDM12 on each side in a pairwise head-to-tail manner, and the SMP-LTD domains of MMM1 and MDM12 generate a continuous hydrophobic tunnel for phospholipid trafficking.</text>
</comment>
<comment type="subcellular location">
    <subcellularLocation>
        <location evidence="1">Mitochondrion outer membrane</location>
        <topology evidence="1">Peripheral membrane protein</topology>
        <orientation evidence="1">Cytoplasmic side</orientation>
    </subcellularLocation>
    <subcellularLocation>
        <location evidence="1">Endoplasmic reticulum membrane</location>
        <topology evidence="1">Peripheral membrane protein</topology>
        <orientation evidence="1">Cytoplasmic side</orientation>
    </subcellularLocation>
    <text evidence="1">The ERMES/MDM complex localizes to a few discrete foci (around 10 per single cell), that represent mitochondria-endoplasmic reticulum junctions. These foci are often found next to mtDNA nucleoids.</text>
</comment>
<comment type="domain">
    <text evidence="1">The SMP-LTD domain is a barrel-like domain that can bind various types of glycerophospholipids in its interior and mediate their transfer between two adjacent bilayers.</text>
</comment>
<comment type="similarity">
    <text evidence="1">Belongs to the MDM12 family.</text>
</comment>
<gene>
    <name evidence="1" type="primary">MDM12</name>
    <name type="ORF">CTRG_04850</name>
</gene>
<evidence type="ECO:0000255" key="1">
    <source>
        <dbReference type="HAMAP-Rule" id="MF_03104"/>
    </source>
</evidence>
<evidence type="ECO:0000256" key="2">
    <source>
        <dbReference type="SAM" id="MobiDB-lite"/>
    </source>
</evidence>
<name>MDM12_CANTT</name>
<organism>
    <name type="scientific">Candida tropicalis (strain ATCC MYA-3404 / T1)</name>
    <name type="common">Yeast</name>
    <dbReference type="NCBI Taxonomy" id="294747"/>
    <lineage>
        <taxon>Eukaryota</taxon>
        <taxon>Fungi</taxon>
        <taxon>Dikarya</taxon>
        <taxon>Ascomycota</taxon>
        <taxon>Saccharomycotina</taxon>
        <taxon>Pichiomycetes</taxon>
        <taxon>Debaryomycetaceae</taxon>
        <taxon>Candida/Lodderomyces clade</taxon>
        <taxon>Candida</taxon>
    </lineage>
</organism>
<proteinExistence type="inferred from homology"/>
<dbReference type="EMBL" id="GG692401">
    <property type="protein sequence ID" value="EER31120.1"/>
    <property type="molecule type" value="Genomic_DNA"/>
</dbReference>
<dbReference type="RefSeq" id="XP_002550552.1">
    <property type="nucleotide sequence ID" value="XM_002550506.1"/>
</dbReference>
<dbReference type="SMR" id="C5MFK7"/>
<dbReference type="STRING" id="294747.C5MFK7"/>
<dbReference type="EnsemblFungi" id="CTRG_04850-t43_1">
    <property type="protein sequence ID" value="CTRG_04850-t43_1-p1"/>
    <property type="gene ID" value="CTRG_04850"/>
</dbReference>
<dbReference type="GeneID" id="8299547"/>
<dbReference type="KEGG" id="ctp:CTRG_04850"/>
<dbReference type="VEuPathDB" id="FungiDB:CTRG_04850"/>
<dbReference type="eggNOG" id="ENOG502S3PB">
    <property type="taxonomic scope" value="Eukaryota"/>
</dbReference>
<dbReference type="HOGENOM" id="CLU_026794_2_0_1"/>
<dbReference type="OrthoDB" id="3356905at2759"/>
<dbReference type="Proteomes" id="UP000002037">
    <property type="component" value="Unassembled WGS sequence"/>
</dbReference>
<dbReference type="GO" id="GO:0005789">
    <property type="term" value="C:endoplasmic reticulum membrane"/>
    <property type="evidence" value="ECO:0007669"/>
    <property type="project" value="UniProtKB-SubCell"/>
</dbReference>
<dbReference type="GO" id="GO:0032865">
    <property type="term" value="C:ERMES complex"/>
    <property type="evidence" value="ECO:0007669"/>
    <property type="project" value="UniProtKB-UniRule"/>
</dbReference>
<dbReference type="GO" id="GO:0008289">
    <property type="term" value="F:lipid binding"/>
    <property type="evidence" value="ECO:0007669"/>
    <property type="project" value="UniProtKB-KW"/>
</dbReference>
<dbReference type="GO" id="GO:0000002">
    <property type="term" value="P:mitochondrial genome maintenance"/>
    <property type="evidence" value="ECO:0007669"/>
    <property type="project" value="UniProtKB-UniRule"/>
</dbReference>
<dbReference type="GO" id="GO:1990456">
    <property type="term" value="P:mitochondrion-endoplasmic reticulum membrane tethering"/>
    <property type="evidence" value="ECO:0007669"/>
    <property type="project" value="TreeGrafter"/>
</dbReference>
<dbReference type="GO" id="GO:0015914">
    <property type="term" value="P:phospholipid transport"/>
    <property type="evidence" value="ECO:0007669"/>
    <property type="project" value="TreeGrafter"/>
</dbReference>
<dbReference type="GO" id="GO:0045040">
    <property type="term" value="P:protein insertion into mitochondrial outer membrane"/>
    <property type="evidence" value="ECO:0007669"/>
    <property type="project" value="UniProtKB-UniRule"/>
</dbReference>
<dbReference type="CDD" id="cd21672">
    <property type="entry name" value="SMP_Mdm12"/>
    <property type="match status" value="1"/>
</dbReference>
<dbReference type="HAMAP" id="MF_03104">
    <property type="entry name" value="Mdm12"/>
    <property type="match status" value="1"/>
</dbReference>
<dbReference type="InterPro" id="IPR027532">
    <property type="entry name" value="Mdm12"/>
</dbReference>
<dbReference type="InterPro" id="IPR019411">
    <property type="entry name" value="MMM1_dom"/>
</dbReference>
<dbReference type="InterPro" id="IPR031468">
    <property type="entry name" value="SMP_LBD"/>
</dbReference>
<dbReference type="PANTHER" id="PTHR28204">
    <property type="entry name" value="MITOCHONDRIAL DISTRIBUTION AND MORPHOLOGY PROTEIN 12"/>
    <property type="match status" value="1"/>
</dbReference>
<dbReference type="PANTHER" id="PTHR28204:SF1">
    <property type="entry name" value="MITOCHONDRIAL DISTRIBUTION AND MORPHOLOGY PROTEIN 12"/>
    <property type="match status" value="1"/>
</dbReference>
<dbReference type="Pfam" id="PF10296">
    <property type="entry name" value="MMM1"/>
    <property type="match status" value="1"/>
</dbReference>
<dbReference type="PROSITE" id="PS51847">
    <property type="entry name" value="SMP"/>
    <property type="match status" value="1"/>
</dbReference>
<accession>C5MFK7</accession>
<reference key="1">
    <citation type="journal article" date="2009" name="Nature">
        <title>Evolution of pathogenicity and sexual reproduction in eight Candida genomes.</title>
        <authorList>
            <person name="Butler G."/>
            <person name="Rasmussen M.D."/>
            <person name="Lin M.F."/>
            <person name="Santos M.A.S."/>
            <person name="Sakthikumar S."/>
            <person name="Munro C.A."/>
            <person name="Rheinbay E."/>
            <person name="Grabherr M."/>
            <person name="Forche A."/>
            <person name="Reedy J.L."/>
            <person name="Agrafioti I."/>
            <person name="Arnaud M.B."/>
            <person name="Bates S."/>
            <person name="Brown A.J.P."/>
            <person name="Brunke S."/>
            <person name="Costanzo M.C."/>
            <person name="Fitzpatrick D.A."/>
            <person name="de Groot P.W.J."/>
            <person name="Harris D."/>
            <person name="Hoyer L.L."/>
            <person name="Hube B."/>
            <person name="Klis F.M."/>
            <person name="Kodira C."/>
            <person name="Lennard N."/>
            <person name="Logue M.E."/>
            <person name="Martin R."/>
            <person name="Neiman A.M."/>
            <person name="Nikolaou E."/>
            <person name="Quail M.A."/>
            <person name="Quinn J."/>
            <person name="Santos M.C."/>
            <person name="Schmitzberger F.F."/>
            <person name="Sherlock G."/>
            <person name="Shah P."/>
            <person name="Silverstein K.A.T."/>
            <person name="Skrzypek M.S."/>
            <person name="Soll D."/>
            <person name="Staggs R."/>
            <person name="Stansfield I."/>
            <person name="Stumpf M.P.H."/>
            <person name="Sudbery P.E."/>
            <person name="Srikantha T."/>
            <person name="Zeng Q."/>
            <person name="Berman J."/>
            <person name="Berriman M."/>
            <person name="Heitman J."/>
            <person name="Gow N.A.R."/>
            <person name="Lorenz M.C."/>
            <person name="Birren B.W."/>
            <person name="Kellis M."/>
            <person name="Cuomo C.A."/>
        </authorList>
    </citation>
    <scope>NUCLEOTIDE SEQUENCE [LARGE SCALE GENOMIC DNA]</scope>
    <source>
        <strain>ATCC MYA-3404 / T1</strain>
    </source>
</reference>
<keyword id="KW-0256">Endoplasmic reticulum</keyword>
<keyword id="KW-0445">Lipid transport</keyword>
<keyword id="KW-0446">Lipid-binding</keyword>
<keyword id="KW-0472">Membrane</keyword>
<keyword id="KW-0496">Mitochondrion</keyword>
<keyword id="KW-1000">Mitochondrion outer membrane</keyword>
<keyword id="KW-1185">Reference proteome</keyword>
<keyword id="KW-0813">Transport</keyword>
<protein>
    <recommendedName>
        <fullName evidence="1">Mitochondrial distribution and morphology protein 12</fullName>
    </recommendedName>
    <alternativeName>
        <fullName evidence="1">Mitochondrial inheritance component MDM12</fullName>
    </alternativeName>
</protein>